<dbReference type="EMBL" id="DS544926">
    <property type="protein sequence ID" value="EDQ75777.1"/>
    <property type="molecule type" value="Genomic_DNA"/>
</dbReference>
<dbReference type="RefSeq" id="XP_001759475.1">
    <property type="nucleotide sequence ID" value="XM_001759423.1"/>
</dbReference>
<dbReference type="EnsemblPlants" id="Pp3c13_22040V3.1">
    <property type="protein sequence ID" value="Pp3c13_22040V3.1"/>
    <property type="gene ID" value="Pp3c13_22040"/>
</dbReference>
<dbReference type="EnsemblPlants" id="Pp3c13_22040V3.11">
    <property type="protein sequence ID" value="Pp3c13_22040V3.11"/>
    <property type="gene ID" value="Pp3c13_22040"/>
</dbReference>
<dbReference type="EnsemblPlants" id="Pp3c13_22040V3.12">
    <property type="protein sequence ID" value="Pp3c13_22040V3.12"/>
    <property type="gene ID" value="Pp3c13_22040"/>
</dbReference>
<dbReference type="EnsemblPlants" id="Pp3c13_22040V3.2">
    <property type="protein sequence ID" value="Pp3c13_22040V3.2"/>
    <property type="gene ID" value="Pp3c13_22040"/>
</dbReference>
<dbReference type="EnsemblPlants" id="Pp3c13_22040V3.3">
    <property type="protein sequence ID" value="Pp3c13_22040V3.3"/>
    <property type="gene ID" value="Pp3c13_22040"/>
</dbReference>
<dbReference type="EnsemblPlants" id="Pp3c13_22040V3.4">
    <property type="protein sequence ID" value="Pp3c13_22040V3.4"/>
    <property type="gene ID" value="Pp3c13_22040"/>
</dbReference>
<dbReference type="EnsemblPlants" id="Pp3c13_22040V3.5">
    <property type="protein sequence ID" value="Pp3c13_22040V3.5"/>
    <property type="gene ID" value="Pp3c13_22040"/>
</dbReference>
<dbReference type="EnsemblPlants" id="Pp3c13_22040V3.6">
    <property type="protein sequence ID" value="Pp3c13_22040V3.6"/>
    <property type="gene ID" value="Pp3c13_22040"/>
</dbReference>
<dbReference type="EnsemblPlants" id="Pp3c13_22040V3.7">
    <property type="protein sequence ID" value="Pp3c13_22040V3.7"/>
    <property type="gene ID" value="Pp3c13_22040"/>
</dbReference>
<dbReference type="EnsemblPlants" id="Pp3c13_22040V3.8">
    <property type="protein sequence ID" value="Pp3c13_22040V3.8"/>
    <property type="gene ID" value="Pp3c13_22040"/>
</dbReference>
<dbReference type="EnsemblPlants" id="Pp3c13_22040V3.9">
    <property type="protein sequence ID" value="Pp3c13_22040V3.9"/>
    <property type="gene ID" value="Pp3c13_22040"/>
</dbReference>
<dbReference type="Gramene" id="Pp3c13_22040V3.1">
    <property type="protein sequence ID" value="Pp3c13_22040V3.1"/>
    <property type="gene ID" value="Pp3c13_22040"/>
</dbReference>
<dbReference type="Gramene" id="Pp3c13_22040V3.11">
    <property type="protein sequence ID" value="Pp3c13_22040V3.11"/>
    <property type="gene ID" value="Pp3c13_22040"/>
</dbReference>
<dbReference type="Gramene" id="Pp3c13_22040V3.12">
    <property type="protein sequence ID" value="Pp3c13_22040V3.12"/>
    <property type="gene ID" value="Pp3c13_22040"/>
</dbReference>
<dbReference type="Gramene" id="Pp3c13_22040V3.2">
    <property type="protein sequence ID" value="Pp3c13_22040V3.2"/>
    <property type="gene ID" value="Pp3c13_22040"/>
</dbReference>
<dbReference type="Gramene" id="Pp3c13_22040V3.3">
    <property type="protein sequence ID" value="Pp3c13_22040V3.3"/>
    <property type="gene ID" value="Pp3c13_22040"/>
</dbReference>
<dbReference type="Gramene" id="Pp3c13_22040V3.4">
    <property type="protein sequence ID" value="Pp3c13_22040V3.4"/>
    <property type="gene ID" value="Pp3c13_22040"/>
</dbReference>
<dbReference type="Gramene" id="Pp3c13_22040V3.5">
    <property type="protein sequence ID" value="Pp3c13_22040V3.5"/>
    <property type="gene ID" value="Pp3c13_22040"/>
</dbReference>
<dbReference type="Gramene" id="Pp3c13_22040V3.6">
    <property type="protein sequence ID" value="Pp3c13_22040V3.6"/>
    <property type="gene ID" value="Pp3c13_22040"/>
</dbReference>
<dbReference type="Gramene" id="Pp3c13_22040V3.7">
    <property type="protein sequence ID" value="Pp3c13_22040V3.7"/>
    <property type="gene ID" value="Pp3c13_22040"/>
</dbReference>
<dbReference type="Gramene" id="Pp3c13_22040V3.8">
    <property type="protein sequence ID" value="Pp3c13_22040V3.8"/>
    <property type="gene ID" value="Pp3c13_22040"/>
</dbReference>
<dbReference type="Gramene" id="Pp3c13_22040V3.9">
    <property type="protein sequence ID" value="Pp3c13_22040V3.9"/>
    <property type="gene ID" value="Pp3c13_22040"/>
</dbReference>
<dbReference type="InParanoid" id="A9RZ57"/>
<dbReference type="OrthoDB" id="672180at2759"/>
<dbReference type="Proteomes" id="UP000006727">
    <property type="component" value="Chromosome 13"/>
</dbReference>
<dbReference type="GO" id="GO:0005886">
    <property type="term" value="C:plasma membrane"/>
    <property type="evidence" value="ECO:0007669"/>
    <property type="project" value="UniProtKB-SubCell"/>
</dbReference>
<dbReference type="InterPro" id="IPR006459">
    <property type="entry name" value="CASP/CASPL"/>
</dbReference>
<dbReference type="InterPro" id="IPR006702">
    <property type="entry name" value="CASP_dom"/>
</dbReference>
<dbReference type="NCBIfam" id="TIGR01569">
    <property type="entry name" value="A_tha_TIGR01569"/>
    <property type="match status" value="1"/>
</dbReference>
<dbReference type="PANTHER" id="PTHR33573:SF50">
    <property type="entry name" value="CASP-LIKE PROTEIN 4A3"/>
    <property type="match status" value="1"/>
</dbReference>
<dbReference type="PANTHER" id="PTHR33573">
    <property type="entry name" value="CASP-LIKE PROTEIN 4A4"/>
    <property type="match status" value="1"/>
</dbReference>
<dbReference type="Pfam" id="PF04535">
    <property type="entry name" value="CASP_dom"/>
    <property type="match status" value="1"/>
</dbReference>
<proteinExistence type="evidence at transcript level"/>
<gene>
    <name type="ORF">PHYPADRAFT_161913</name>
</gene>
<accession>A9RZ57</accession>
<name>CSPLD_PHYPA</name>
<keyword id="KW-1003">Cell membrane</keyword>
<keyword id="KW-0325">Glycoprotein</keyword>
<keyword id="KW-0472">Membrane</keyword>
<keyword id="KW-1185">Reference proteome</keyword>
<keyword id="KW-0812">Transmembrane</keyword>
<keyword id="KW-1133">Transmembrane helix</keyword>
<organism>
    <name type="scientific">Physcomitrium patens</name>
    <name type="common">Spreading-leaved earth moss</name>
    <name type="synonym">Physcomitrella patens</name>
    <dbReference type="NCBI Taxonomy" id="3218"/>
    <lineage>
        <taxon>Eukaryota</taxon>
        <taxon>Viridiplantae</taxon>
        <taxon>Streptophyta</taxon>
        <taxon>Embryophyta</taxon>
        <taxon>Bryophyta</taxon>
        <taxon>Bryophytina</taxon>
        <taxon>Bryopsida</taxon>
        <taxon>Funariidae</taxon>
        <taxon>Funariales</taxon>
        <taxon>Funariaceae</taxon>
        <taxon>Physcomitrium</taxon>
    </lineage>
</organism>
<sequence>MGTLTDPTVDPADPHVKADDGAGLIDAGQVHPERLETLAEDQSQRDGANGVHFPVKTNTGNAAESTASTENGETGSIDVGKLRTKPSPVQTHIHRGGSEGLYRGASGGIYRSASGSTHIHRGASGGILRGQSGGIHRGRSGAIHLPSLQSISFSMTRLPEEDAGVMMHFTETKETETTPESSRASDEDAPTPKKKHRLRKHLTAIGAYSFAFRFSETVLSLIAIVVMCSTRGSMRTDGVDFGTLKFNHFQAYRYLVAVNVIVFVYSTFQFIQLLYTVILGISFIPSIFISTWMTFGFDQLFLYLLLSASTSAATVANMSYTGEMGIQLCSRFDVGSFCSKADVAVTMSFFAVLAMLSSTILAIYRIAVLLREY</sequence>
<reference key="1">
    <citation type="journal article" date="2008" name="Science">
        <title>The Physcomitrella genome reveals evolutionary insights into the conquest of land by plants.</title>
        <authorList>
            <person name="Rensing S.A."/>
            <person name="Lang D."/>
            <person name="Zimmer A.D."/>
            <person name="Terry A."/>
            <person name="Salamov A."/>
            <person name="Shapiro H."/>
            <person name="Nishiyama T."/>
            <person name="Perroud P.-F."/>
            <person name="Lindquist E.A."/>
            <person name="Kamisugi Y."/>
            <person name="Tanahashi T."/>
            <person name="Sakakibara K."/>
            <person name="Fujita T."/>
            <person name="Oishi K."/>
            <person name="Shin-I T."/>
            <person name="Kuroki Y."/>
            <person name="Toyoda A."/>
            <person name="Suzuki Y."/>
            <person name="Hashimoto S.-I."/>
            <person name="Yamaguchi K."/>
            <person name="Sugano S."/>
            <person name="Kohara Y."/>
            <person name="Fujiyama A."/>
            <person name="Anterola A."/>
            <person name="Aoki S."/>
            <person name="Ashton N."/>
            <person name="Barbazuk W.B."/>
            <person name="Barker E."/>
            <person name="Bennetzen J.L."/>
            <person name="Blankenship R."/>
            <person name="Cho S.H."/>
            <person name="Dutcher S.K."/>
            <person name="Estelle M."/>
            <person name="Fawcett J.A."/>
            <person name="Gundlach H."/>
            <person name="Hanada K."/>
            <person name="Heyl A."/>
            <person name="Hicks K.A."/>
            <person name="Hughes J."/>
            <person name="Lohr M."/>
            <person name="Mayer K."/>
            <person name="Melkozernov A."/>
            <person name="Murata T."/>
            <person name="Nelson D.R."/>
            <person name="Pils B."/>
            <person name="Prigge M."/>
            <person name="Reiss B."/>
            <person name="Renner T."/>
            <person name="Rombauts S."/>
            <person name="Rushton P.J."/>
            <person name="Sanderfoot A."/>
            <person name="Schween G."/>
            <person name="Shiu S.-H."/>
            <person name="Stueber K."/>
            <person name="Theodoulou F.L."/>
            <person name="Tu H."/>
            <person name="Van de Peer Y."/>
            <person name="Verrier P.J."/>
            <person name="Waters E."/>
            <person name="Wood A."/>
            <person name="Yang L."/>
            <person name="Cove D."/>
            <person name="Cuming A.C."/>
            <person name="Hasebe M."/>
            <person name="Lucas S."/>
            <person name="Mishler B.D."/>
            <person name="Reski R."/>
            <person name="Grigoriev I.V."/>
            <person name="Quatrano R.S."/>
            <person name="Boore J.L."/>
        </authorList>
    </citation>
    <scope>NUCLEOTIDE SEQUENCE [LARGE SCALE GENOMIC DNA]</scope>
    <source>
        <strain>cv. Gransden 2004</strain>
    </source>
</reference>
<reference key="2">
    <citation type="journal article" date="2014" name="Plant Physiol.">
        <title>Functional and evolutionary analysis of the CASPARIAN STRIP MEMBRANE DOMAIN PROTEIN family.</title>
        <authorList>
            <person name="Roppolo D."/>
            <person name="Boeckmann B."/>
            <person name="Pfister A."/>
            <person name="Boutet E."/>
            <person name="Rubio M.C."/>
            <person name="Denervaud-Tendon V."/>
            <person name="Vermeer J.E."/>
            <person name="Gheyselinck J."/>
            <person name="Xenarios I."/>
            <person name="Geldner N."/>
        </authorList>
    </citation>
    <scope>GENE FAMILY</scope>
    <scope>NOMENCLATURE</scope>
</reference>
<protein>
    <recommendedName>
        <fullName>CASP-like protein UU6</fullName>
        <shortName>PpCASPLUU6</shortName>
    </recommendedName>
</protein>
<comment type="subunit">
    <text evidence="1">Homodimer and heterodimers.</text>
</comment>
<comment type="subcellular location">
    <subcellularLocation>
        <location evidence="1">Cell membrane</location>
        <topology evidence="1">Multi-pass membrane protein</topology>
    </subcellularLocation>
</comment>
<comment type="similarity">
    <text evidence="4">Belongs to the Casparian strip membrane proteins (CASP) family.</text>
</comment>
<evidence type="ECO:0000250" key="1"/>
<evidence type="ECO:0000255" key="2"/>
<evidence type="ECO:0000256" key="3">
    <source>
        <dbReference type="SAM" id="MobiDB-lite"/>
    </source>
</evidence>
<evidence type="ECO:0000305" key="4"/>
<feature type="chain" id="PRO_0000391563" description="CASP-like protein UU6">
    <location>
        <begin position="1"/>
        <end position="373"/>
    </location>
</feature>
<feature type="topological domain" description="Cytoplasmic" evidence="2">
    <location>
        <begin position="1"/>
        <end position="204"/>
    </location>
</feature>
<feature type="transmembrane region" description="Helical" evidence="2">
    <location>
        <begin position="205"/>
        <end position="225"/>
    </location>
</feature>
<feature type="topological domain" description="Extracellular" evidence="2">
    <location>
        <begin position="226"/>
        <end position="253"/>
    </location>
</feature>
<feature type="transmembrane region" description="Helical" evidence="2">
    <location>
        <begin position="254"/>
        <end position="274"/>
    </location>
</feature>
<feature type="topological domain" description="Cytoplasmic" evidence="2">
    <location>
        <begin position="275"/>
        <end position="276"/>
    </location>
</feature>
<feature type="transmembrane region" description="Helical" evidence="2">
    <location>
        <begin position="277"/>
        <end position="297"/>
    </location>
</feature>
<feature type="topological domain" description="Extracellular" evidence="2">
    <location>
        <begin position="298"/>
        <end position="342"/>
    </location>
</feature>
<feature type="transmembrane region" description="Helical" evidence="2">
    <location>
        <begin position="343"/>
        <end position="363"/>
    </location>
</feature>
<feature type="topological domain" description="Cytoplasmic" evidence="2">
    <location>
        <begin position="364"/>
        <end position="373"/>
    </location>
</feature>
<feature type="region of interest" description="Disordered" evidence="3">
    <location>
        <begin position="1"/>
        <end position="100"/>
    </location>
</feature>
<feature type="region of interest" description="Disordered" evidence="3">
    <location>
        <begin position="172"/>
        <end position="195"/>
    </location>
</feature>
<feature type="compositionally biased region" description="Polar residues" evidence="3">
    <location>
        <begin position="56"/>
        <end position="74"/>
    </location>
</feature>
<feature type="glycosylation site" description="N-linked (GlcNAc...) asparagine" evidence="2">
    <location>
        <position position="317"/>
    </location>
</feature>